<evidence type="ECO:0000250" key="1">
    <source>
        <dbReference type="UniProtKB" id="Q8WVY7"/>
    </source>
</evidence>
<evidence type="ECO:0000255" key="2">
    <source>
        <dbReference type="PROSITE-ProRule" id="PRU00214"/>
    </source>
</evidence>
<evidence type="ECO:0000255" key="3">
    <source>
        <dbReference type="PROSITE-ProRule" id="PRU00336"/>
    </source>
</evidence>
<evidence type="ECO:0000269" key="4">
    <source>
    </source>
</evidence>
<evidence type="ECO:0000305" key="5"/>
<evidence type="ECO:0000312" key="6">
    <source>
        <dbReference type="EMBL" id="AAD34759.1"/>
    </source>
</evidence>
<evidence type="ECO:0000312" key="7">
    <source>
        <dbReference type="FlyBase" id="FBgn0027526"/>
    </source>
</evidence>
<evidence type="ECO:0000312" key="8">
    <source>
        <dbReference type="Proteomes" id="UP000000803"/>
    </source>
</evidence>
<evidence type="ECO:0007744" key="9">
    <source>
        <dbReference type="PDB" id="3SHQ"/>
    </source>
</evidence>
<evidence type="ECO:0007829" key="10">
    <source>
        <dbReference type="PDB" id="3SHQ"/>
    </source>
</evidence>
<name>UBCP1_DROME</name>
<protein>
    <recommendedName>
        <fullName evidence="7">Ubiquitin-like domain-containing CTD phosphatase 1</fullName>
        <ecNumber evidence="1">3.1.3.16</ecNumber>
    </recommendedName>
    <alternativeName>
        <fullName evidence="5">Nuclear proteasome inhibitor Ublcp1</fullName>
    </alternativeName>
</protein>
<proteinExistence type="evidence at protein level"/>
<comment type="function">
    <text evidence="1">Dephosphorylates 26S nuclear proteasomes, thereby decreasing their proteolytic activity (By similarity). Recruited to the 19S regulatory particle of the 26S proteasome where it dephosphorylates 19S component Rpt1 which impairs Rpt1 ATPase activity and disrupts 26S proteasome assembly (By similarity).</text>
</comment>
<comment type="catalytic activity">
    <reaction evidence="1">
        <text>O-phospho-L-seryl-[protein] + H2O = L-seryl-[protein] + phosphate</text>
        <dbReference type="Rhea" id="RHEA:20629"/>
        <dbReference type="Rhea" id="RHEA-COMP:9863"/>
        <dbReference type="Rhea" id="RHEA-COMP:11604"/>
        <dbReference type="ChEBI" id="CHEBI:15377"/>
        <dbReference type="ChEBI" id="CHEBI:29999"/>
        <dbReference type="ChEBI" id="CHEBI:43474"/>
        <dbReference type="ChEBI" id="CHEBI:83421"/>
        <dbReference type="EC" id="3.1.3.16"/>
    </reaction>
</comment>
<comment type="catalytic activity">
    <reaction evidence="1">
        <text>O-phospho-L-threonyl-[protein] + H2O = L-threonyl-[protein] + phosphate</text>
        <dbReference type="Rhea" id="RHEA:47004"/>
        <dbReference type="Rhea" id="RHEA-COMP:11060"/>
        <dbReference type="Rhea" id="RHEA-COMP:11605"/>
        <dbReference type="ChEBI" id="CHEBI:15377"/>
        <dbReference type="ChEBI" id="CHEBI:30013"/>
        <dbReference type="ChEBI" id="CHEBI:43474"/>
        <dbReference type="ChEBI" id="CHEBI:61977"/>
        <dbReference type="EC" id="3.1.3.16"/>
    </reaction>
</comment>
<comment type="cofactor">
    <cofactor evidence="4">
        <name>Mg(2+)</name>
        <dbReference type="ChEBI" id="CHEBI:18420"/>
    </cofactor>
</comment>
<comment type="subcellular location">
    <subcellularLocation>
        <location evidence="1">Nucleus</location>
    </subcellularLocation>
</comment>
<accession>Q9XZ16</accession>
<sequence>MEVKEVVVIVKWSGKEYPVDLTDQDTVEVLRHEIFRKTQVRPERQKLLNLKYKGKTAADNVKISALELKPNFKLMMVGSTEADIEDACSLPDNIGEVVDDFDDADEREESVEHSAVYLAKVQRRVRDYKIKELAPPREGKKLLVLDIDYTLFDHRSPAETGTELMRPYLHEFLTSAYEDYDIVIWSATSMRWIEEKMRLLGVASNDNYKVMFYLDSTAMISVHVPERGVVDVKPLGVIWALYKQYNSSNTIMFDDIRRNFLMNPKSGLKIRPFRQAHLNRGTDTELLKLSDYLRKIAHHCPDFNSLNHRKWEHYHPKKNS</sequence>
<organism evidence="8">
    <name type="scientific">Drosophila melanogaster</name>
    <name type="common">Fruit fly</name>
    <dbReference type="NCBI Taxonomy" id="7227"/>
    <lineage>
        <taxon>Eukaryota</taxon>
        <taxon>Metazoa</taxon>
        <taxon>Ecdysozoa</taxon>
        <taxon>Arthropoda</taxon>
        <taxon>Hexapoda</taxon>
        <taxon>Insecta</taxon>
        <taxon>Pterygota</taxon>
        <taxon>Neoptera</taxon>
        <taxon>Endopterygota</taxon>
        <taxon>Diptera</taxon>
        <taxon>Brachycera</taxon>
        <taxon>Muscomorpha</taxon>
        <taxon>Ephydroidea</taxon>
        <taxon>Drosophilidae</taxon>
        <taxon>Drosophila</taxon>
        <taxon>Sophophora</taxon>
    </lineage>
</organism>
<keyword id="KW-0002">3D-structure</keyword>
<keyword id="KW-0378">Hydrolase</keyword>
<keyword id="KW-0460">Magnesium</keyword>
<keyword id="KW-0479">Metal-binding</keyword>
<keyword id="KW-0539">Nucleus</keyword>
<keyword id="KW-0904">Protein phosphatase</keyword>
<keyword id="KW-1185">Reference proteome</keyword>
<reference evidence="8" key="1">
    <citation type="journal article" date="2000" name="Science">
        <title>The genome sequence of Drosophila melanogaster.</title>
        <authorList>
            <person name="Adams M.D."/>
            <person name="Celniker S.E."/>
            <person name="Holt R.A."/>
            <person name="Evans C.A."/>
            <person name="Gocayne J.D."/>
            <person name="Amanatides P.G."/>
            <person name="Scherer S.E."/>
            <person name="Li P.W."/>
            <person name="Hoskins R.A."/>
            <person name="Galle R.F."/>
            <person name="George R.A."/>
            <person name="Lewis S.E."/>
            <person name="Richards S."/>
            <person name="Ashburner M."/>
            <person name="Henderson S.N."/>
            <person name="Sutton G.G."/>
            <person name="Wortman J.R."/>
            <person name="Yandell M.D."/>
            <person name="Zhang Q."/>
            <person name="Chen L.X."/>
            <person name="Brandon R.C."/>
            <person name="Rogers Y.-H.C."/>
            <person name="Blazej R.G."/>
            <person name="Champe M."/>
            <person name="Pfeiffer B.D."/>
            <person name="Wan K.H."/>
            <person name="Doyle C."/>
            <person name="Baxter E.G."/>
            <person name="Helt G."/>
            <person name="Nelson C.R."/>
            <person name="Miklos G.L.G."/>
            <person name="Abril J.F."/>
            <person name="Agbayani A."/>
            <person name="An H.-J."/>
            <person name="Andrews-Pfannkoch C."/>
            <person name="Baldwin D."/>
            <person name="Ballew R.M."/>
            <person name="Basu A."/>
            <person name="Baxendale J."/>
            <person name="Bayraktaroglu L."/>
            <person name="Beasley E.M."/>
            <person name="Beeson K.Y."/>
            <person name="Benos P.V."/>
            <person name="Berman B.P."/>
            <person name="Bhandari D."/>
            <person name="Bolshakov S."/>
            <person name="Borkova D."/>
            <person name="Botchan M.R."/>
            <person name="Bouck J."/>
            <person name="Brokstein P."/>
            <person name="Brottier P."/>
            <person name="Burtis K.C."/>
            <person name="Busam D.A."/>
            <person name="Butler H."/>
            <person name="Cadieu E."/>
            <person name="Center A."/>
            <person name="Chandra I."/>
            <person name="Cherry J.M."/>
            <person name="Cawley S."/>
            <person name="Dahlke C."/>
            <person name="Davenport L.B."/>
            <person name="Davies P."/>
            <person name="de Pablos B."/>
            <person name="Delcher A."/>
            <person name="Deng Z."/>
            <person name="Mays A.D."/>
            <person name="Dew I."/>
            <person name="Dietz S.M."/>
            <person name="Dodson K."/>
            <person name="Doup L.E."/>
            <person name="Downes M."/>
            <person name="Dugan-Rocha S."/>
            <person name="Dunkov B.C."/>
            <person name="Dunn P."/>
            <person name="Durbin K.J."/>
            <person name="Evangelista C.C."/>
            <person name="Ferraz C."/>
            <person name="Ferriera S."/>
            <person name="Fleischmann W."/>
            <person name="Fosler C."/>
            <person name="Gabrielian A.E."/>
            <person name="Garg N.S."/>
            <person name="Gelbart W.M."/>
            <person name="Glasser K."/>
            <person name="Glodek A."/>
            <person name="Gong F."/>
            <person name="Gorrell J.H."/>
            <person name="Gu Z."/>
            <person name="Guan P."/>
            <person name="Harris M."/>
            <person name="Harris N.L."/>
            <person name="Harvey D.A."/>
            <person name="Heiman T.J."/>
            <person name="Hernandez J.R."/>
            <person name="Houck J."/>
            <person name="Hostin D."/>
            <person name="Houston K.A."/>
            <person name="Howland T.J."/>
            <person name="Wei M.-H."/>
            <person name="Ibegwam C."/>
            <person name="Jalali M."/>
            <person name="Kalush F."/>
            <person name="Karpen G.H."/>
            <person name="Ke Z."/>
            <person name="Kennison J.A."/>
            <person name="Ketchum K.A."/>
            <person name="Kimmel B.E."/>
            <person name="Kodira C.D."/>
            <person name="Kraft C.L."/>
            <person name="Kravitz S."/>
            <person name="Kulp D."/>
            <person name="Lai Z."/>
            <person name="Lasko P."/>
            <person name="Lei Y."/>
            <person name="Levitsky A.A."/>
            <person name="Li J.H."/>
            <person name="Li Z."/>
            <person name="Liang Y."/>
            <person name="Lin X."/>
            <person name="Liu X."/>
            <person name="Mattei B."/>
            <person name="McIntosh T.C."/>
            <person name="McLeod M.P."/>
            <person name="McPherson D."/>
            <person name="Merkulov G."/>
            <person name="Milshina N.V."/>
            <person name="Mobarry C."/>
            <person name="Morris J."/>
            <person name="Moshrefi A."/>
            <person name="Mount S.M."/>
            <person name="Moy M."/>
            <person name="Murphy B."/>
            <person name="Murphy L."/>
            <person name="Muzny D.M."/>
            <person name="Nelson D.L."/>
            <person name="Nelson D.R."/>
            <person name="Nelson K.A."/>
            <person name="Nixon K."/>
            <person name="Nusskern D.R."/>
            <person name="Pacleb J.M."/>
            <person name="Palazzolo M."/>
            <person name="Pittman G.S."/>
            <person name="Pan S."/>
            <person name="Pollard J."/>
            <person name="Puri V."/>
            <person name="Reese M.G."/>
            <person name="Reinert K."/>
            <person name="Remington K."/>
            <person name="Saunders R.D.C."/>
            <person name="Scheeler F."/>
            <person name="Shen H."/>
            <person name="Shue B.C."/>
            <person name="Siden-Kiamos I."/>
            <person name="Simpson M."/>
            <person name="Skupski M.P."/>
            <person name="Smith T.J."/>
            <person name="Spier E."/>
            <person name="Spradling A.C."/>
            <person name="Stapleton M."/>
            <person name="Strong R."/>
            <person name="Sun E."/>
            <person name="Svirskas R."/>
            <person name="Tector C."/>
            <person name="Turner R."/>
            <person name="Venter E."/>
            <person name="Wang A.H."/>
            <person name="Wang X."/>
            <person name="Wang Z.-Y."/>
            <person name="Wassarman D.A."/>
            <person name="Weinstock G.M."/>
            <person name="Weissenbach J."/>
            <person name="Williams S.M."/>
            <person name="Woodage T."/>
            <person name="Worley K.C."/>
            <person name="Wu D."/>
            <person name="Yang S."/>
            <person name="Yao Q.A."/>
            <person name="Ye J."/>
            <person name="Yeh R.-F."/>
            <person name="Zaveri J.S."/>
            <person name="Zhan M."/>
            <person name="Zhang G."/>
            <person name="Zhao Q."/>
            <person name="Zheng L."/>
            <person name="Zheng X.H."/>
            <person name="Zhong F.N."/>
            <person name="Zhong W."/>
            <person name="Zhou X."/>
            <person name="Zhu S.C."/>
            <person name="Zhu X."/>
            <person name="Smith H.O."/>
            <person name="Gibbs R.A."/>
            <person name="Myers E.W."/>
            <person name="Rubin G.M."/>
            <person name="Venter J.C."/>
        </authorList>
    </citation>
    <scope>NUCLEOTIDE SEQUENCE [LARGE SCALE GENOMIC DNA]</scope>
    <source>
        <strain evidence="8">Berkeley</strain>
    </source>
</reference>
<reference evidence="8" key="2">
    <citation type="journal article" date="2002" name="Genome Biol.">
        <title>Annotation of the Drosophila melanogaster euchromatic genome: a systematic review.</title>
        <authorList>
            <person name="Misra S."/>
            <person name="Crosby M.A."/>
            <person name="Mungall C.J."/>
            <person name="Matthews B.B."/>
            <person name="Campbell K.S."/>
            <person name="Hradecky P."/>
            <person name="Huang Y."/>
            <person name="Kaminker J.S."/>
            <person name="Millburn G.H."/>
            <person name="Prochnik S.E."/>
            <person name="Smith C.D."/>
            <person name="Tupy J.L."/>
            <person name="Whitfield E.J."/>
            <person name="Bayraktaroglu L."/>
            <person name="Berman B.P."/>
            <person name="Bettencourt B.R."/>
            <person name="Celniker S.E."/>
            <person name="de Grey A.D.N.J."/>
            <person name="Drysdale R.A."/>
            <person name="Harris N.L."/>
            <person name="Richter J."/>
            <person name="Russo S."/>
            <person name="Schroeder A.J."/>
            <person name="Shu S.Q."/>
            <person name="Stapleton M."/>
            <person name="Yamada C."/>
            <person name="Ashburner M."/>
            <person name="Gelbart W.M."/>
            <person name="Rubin G.M."/>
            <person name="Lewis S.E."/>
        </authorList>
    </citation>
    <scope>GENOME REANNOTATION</scope>
    <source>
        <strain evidence="8">Berkeley</strain>
    </source>
</reference>
<reference evidence="6" key="3">
    <citation type="journal article" date="2000" name="Science">
        <title>A Drosophila complementary DNA resource.</title>
        <authorList>
            <person name="Rubin G.M."/>
            <person name="Hong L."/>
            <person name="Brokstein P."/>
            <person name="Evans-Holm M."/>
            <person name="Frise E."/>
            <person name="Stapleton M."/>
            <person name="Harvey D.A."/>
        </authorList>
    </citation>
    <scope>NUCLEOTIDE SEQUENCE [LARGE SCALE MRNA]</scope>
</reference>
<reference evidence="9" key="4">
    <citation type="journal article" date="2011" name="Proc. Natl. Acad. Sci. U.S.A.">
        <title>UBLCP1 is a 26S proteasome phosphatase that regulates nuclear proteasome activity.</title>
        <authorList>
            <person name="Guo X."/>
            <person name="Engel J.L."/>
            <person name="Xiao J."/>
            <person name="Tagliabracci V.S."/>
            <person name="Wang X."/>
            <person name="Huang L."/>
            <person name="Dixon J.E."/>
        </authorList>
    </citation>
    <scope>X-RAY CRYSTALLOGRAPHY (1.96 ANGSTROMS) IN COMPLEX WITH MG(2+)</scope>
</reference>
<feature type="chain" id="PRO_0000458043" description="Ubiquitin-like domain-containing CTD phosphatase 1">
    <location>
        <begin position="1"/>
        <end position="320"/>
    </location>
</feature>
<feature type="domain" description="Ubiquitin-like" evidence="2">
    <location>
        <begin position="6"/>
        <end position="77"/>
    </location>
</feature>
<feature type="domain" description="FCP1 homology" evidence="3">
    <location>
        <begin position="136"/>
        <end position="296"/>
    </location>
</feature>
<feature type="binding site" evidence="4 9">
    <location>
        <position position="146"/>
    </location>
    <ligand>
        <name>Mg(2+)</name>
        <dbReference type="ChEBI" id="CHEBI:18420"/>
    </ligand>
</feature>
<feature type="binding site" evidence="4 9">
    <location>
        <position position="148"/>
    </location>
    <ligand>
        <name>Mg(2+)</name>
        <dbReference type="ChEBI" id="CHEBI:18420"/>
    </ligand>
</feature>
<feature type="binding site" evidence="4 9">
    <location>
        <position position="255"/>
    </location>
    <ligand>
        <name>Mg(2+)</name>
        <dbReference type="ChEBI" id="CHEBI:18420"/>
    </ligand>
</feature>
<feature type="strand" evidence="10">
    <location>
        <begin position="5"/>
        <end position="12"/>
    </location>
</feature>
<feature type="strand" evidence="10">
    <location>
        <begin position="15"/>
        <end position="22"/>
    </location>
</feature>
<feature type="helix" evidence="10">
    <location>
        <begin position="27"/>
        <end position="38"/>
    </location>
</feature>
<feature type="helix" evidence="10">
    <location>
        <begin position="42"/>
        <end position="44"/>
    </location>
</feature>
<feature type="strand" evidence="10">
    <location>
        <begin position="51"/>
        <end position="56"/>
    </location>
</feature>
<feature type="strand" evidence="10">
    <location>
        <begin position="73"/>
        <end position="77"/>
    </location>
</feature>
<feature type="helix" evidence="10">
    <location>
        <begin position="115"/>
        <end position="127"/>
    </location>
</feature>
<feature type="strand" evidence="10">
    <location>
        <begin position="141"/>
        <end position="145"/>
    </location>
</feature>
<feature type="turn" evidence="10">
    <location>
        <begin position="148"/>
        <end position="150"/>
    </location>
</feature>
<feature type="strand" evidence="10">
    <location>
        <begin position="154"/>
        <end position="156"/>
    </location>
</feature>
<feature type="helix" evidence="10">
    <location>
        <begin position="161"/>
        <end position="164"/>
    </location>
</feature>
<feature type="helix" evidence="10">
    <location>
        <begin position="169"/>
        <end position="179"/>
    </location>
</feature>
<feature type="strand" evidence="10">
    <location>
        <begin position="180"/>
        <end position="185"/>
    </location>
</feature>
<feature type="helix" evidence="10">
    <location>
        <begin position="190"/>
        <end position="199"/>
    </location>
</feature>
<feature type="strand" evidence="10">
    <location>
        <begin position="212"/>
        <end position="214"/>
    </location>
</feature>
<feature type="helix" evidence="10">
    <location>
        <begin position="216"/>
        <end position="218"/>
    </location>
</feature>
<feature type="strand" evidence="10">
    <location>
        <begin position="220"/>
        <end position="224"/>
    </location>
</feature>
<feature type="turn" evidence="10">
    <location>
        <begin position="225"/>
        <end position="227"/>
    </location>
</feature>
<feature type="strand" evidence="10">
    <location>
        <begin position="228"/>
        <end position="232"/>
    </location>
</feature>
<feature type="helix" evidence="10">
    <location>
        <begin position="235"/>
        <end position="241"/>
    </location>
</feature>
<feature type="helix" evidence="10">
    <location>
        <begin position="247"/>
        <end position="249"/>
    </location>
</feature>
<feature type="strand" evidence="10">
    <location>
        <begin position="250"/>
        <end position="255"/>
    </location>
</feature>
<feature type="helix" evidence="10">
    <location>
        <begin position="257"/>
        <end position="260"/>
    </location>
</feature>
<feature type="helix" evidence="10">
    <location>
        <begin position="264"/>
        <end position="266"/>
    </location>
</feature>
<feature type="strand" evidence="10">
    <location>
        <begin position="267"/>
        <end position="269"/>
    </location>
</feature>
<feature type="helix" evidence="10">
    <location>
        <begin position="276"/>
        <end position="279"/>
    </location>
</feature>
<feature type="turn" evidence="10">
    <location>
        <begin position="280"/>
        <end position="282"/>
    </location>
</feature>
<feature type="helix" evidence="10">
    <location>
        <begin position="285"/>
        <end position="299"/>
    </location>
</feature>
<feature type="helix" evidence="10">
    <location>
        <begin position="303"/>
        <end position="305"/>
    </location>
</feature>
<feature type="helix" evidence="10">
    <location>
        <begin position="308"/>
        <end position="313"/>
    </location>
</feature>
<gene>
    <name evidence="7" type="primary">Ublcp1</name>
    <name evidence="7" type="ORF">CG6697</name>
</gene>
<dbReference type="EC" id="3.1.3.16" evidence="1"/>
<dbReference type="EMBL" id="AE014297">
    <property type="protein sequence ID" value="AAF56091.1"/>
    <property type="molecule type" value="Genomic_DNA"/>
</dbReference>
<dbReference type="EMBL" id="AF132171">
    <property type="protein sequence ID" value="AAD34759.1"/>
    <property type="molecule type" value="mRNA"/>
</dbReference>
<dbReference type="RefSeq" id="NP_651118.1">
    <property type="nucleotide sequence ID" value="NM_142861.4"/>
</dbReference>
<dbReference type="PDB" id="3SHQ">
    <property type="method" value="X-ray"/>
    <property type="resolution" value="1.96 A"/>
    <property type="chains" value="A=1-320"/>
</dbReference>
<dbReference type="PDBsum" id="3SHQ"/>
<dbReference type="SMR" id="Q9XZ16"/>
<dbReference type="FunCoup" id="Q9XZ16">
    <property type="interactions" value="2467"/>
</dbReference>
<dbReference type="IntAct" id="Q9XZ16">
    <property type="interactions" value="1"/>
</dbReference>
<dbReference type="STRING" id="7227.FBpp0083740"/>
<dbReference type="PaxDb" id="7227-FBpp0083740"/>
<dbReference type="DNASU" id="42726"/>
<dbReference type="EnsemblMetazoa" id="FBtr0084347">
    <property type="protein sequence ID" value="FBpp0083740"/>
    <property type="gene ID" value="FBgn0027526"/>
</dbReference>
<dbReference type="GeneID" id="42726"/>
<dbReference type="KEGG" id="dme:Dmel_CG6697"/>
<dbReference type="UCSC" id="CG6697-RA">
    <property type="organism name" value="d. melanogaster"/>
</dbReference>
<dbReference type="AGR" id="FB:FBgn0027526"/>
<dbReference type="CTD" id="134510"/>
<dbReference type="FlyBase" id="FBgn0027526">
    <property type="gene designation" value="Ublcp1"/>
</dbReference>
<dbReference type="VEuPathDB" id="VectorBase:FBgn0027526"/>
<dbReference type="eggNOG" id="KOG1605">
    <property type="taxonomic scope" value="Eukaryota"/>
</dbReference>
<dbReference type="eggNOG" id="KOG1872">
    <property type="taxonomic scope" value="Eukaryota"/>
</dbReference>
<dbReference type="GeneTree" id="ENSGT00390000010107"/>
<dbReference type="HOGENOM" id="CLU_046931_1_0_1"/>
<dbReference type="InParanoid" id="Q9XZ16"/>
<dbReference type="OMA" id="TVHTPKY"/>
<dbReference type="OrthoDB" id="1711508at2759"/>
<dbReference type="BioGRID-ORCS" id="42726">
    <property type="hits" value="0 hits in 3 CRISPR screens"/>
</dbReference>
<dbReference type="EvolutionaryTrace" id="Q9XZ16"/>
<dbReference type="GenomeRNAi" id="42726"/>
<dbReference type="PRO" id="PR:Q9XZ16"/>
<dbReference type="Proteomes" id="UP000000803">
    <property type="component" value="Chromosome 3R"/>
</dbReference>
<dbReference type="Bgee" id="FBgn0027526">
    <property type="expression patterns" value="Expressed in eye disc (Drosophila) and 90 other cell types or tissues"/>
</dbReference>
<dbReference type="GO" id="GO:0005634">
    <property type="term" value="C:nucleus"/>
    <property type="evidence" value="ECO:0000250"/>
    <property type="project" value="FlyBase"/>
</dbReference>
<dbReference type="GO" id="GO:0046872">
    <property type="term" value="F:metal ion binding"/>
    <property type="evidence" value="ECO:0007669"/>
    <property type="project" value="UniProtKB-KW"/>
</dbReference>
<dbReference type="GO" id="GO:0004722">
    <property type="term" value="F:protein serine/threonine phosphatase activity"/>
    <property type="evidence" value="ECO:0000250"/>
    <property type="project" value="FlyBase"/>
</dbReference>
<dbReference type="GO" id="GO:0090364">
    <property type="term" value="P:regulation of proteasome assembly"/>
    <property type="evidence" value="ECO:0000318"/>
    <property type="project" value="GO_Central"/>
</dbReference>
<dbReference type="CDD" id="cd01813">
    <property type="entry name" value="Ubl_UBLCP1"/>
    <property type="match status" value="1"/>
</dbReference>
<dbReference type="FunFam" id="3.10.20.90:FF:000399">
    <property type="entry name" value="Ubiquitin-like domain-containing CTD phosphatase 1"/>
    <property type="match status" value="1"/>
</dbReference>
<dbReference type="FunFam" id="3.40.50.1000:FF:000050">
    <property type="entry name" value="Ubiquitin-like domain-containing CTD phosphatase 1"/>
    <property type="match status" value="1"/>
</dbReference>
<dbReference type="Gene3D" id="3.40.50.1000">
    <property type="entry name" value="HAD superfamily/HAD-like"/>
    <property type="match status" value="1"/>
</dbReference>
<dbReference type="Gene3D" id="3.10.20.90">
    <property type="entry name" value="Phosphatidylinositol 3-kinase Catalytic Subunit, Chain A, domain 1"/>
    <property type="match status" value="1"/>
</dbReference>
<dbReference type="InterPro" id="IPR004274">
    <property type="entry name" value="FCP1_dom"/>
</dbReference>
<dbReference type="InterPro" id="IPR036412">
    <property type="entry name" value="HAD-like_sf"/>
</dbReference>
<dbReference type="InterPro" id="IPR011943">
    <property type="entry name" value="HAD-SF_hydro_IIID"/>
</dbReference>
<dbReference type="InterPro" id="IPR023214">
    <property type="entry name" value="HAD_sf"/>
</dbReference>
<dbReference type="InterPro" id="IPR000626">
    <property type="entry name" value="Ubiquitin-like_dom"/>
</dbReference>
<dbReference type="InterPro" id="IPR029071">
    <property type="entry name" value="Ubiquitin-like_domsf"/>
</dbReference>
<dbReference type="InterPro" id="IPR051658">
    <property type="entry name" value="UBLCP1"/>
</dbReference>
<dbReference type="NCBIfam" id="TIGR02245">
    <property type="entry name" value="HAD_IIID1"/>
    <property type="match status" value="1"/>
</dbReference>
<dbReference type="PANTHER" id="PTHR48493">
    <property type="entry name" value="UBIQUITIN-LIKE DOMAIN-CONTAINING CTD PHOSPHATASE 1"/>
    <property type="match status" value="1"/>
</dbReference>
<dbReference type="PANTHER" id="PTHR48493:SF1">
    <property type="entry name" value="UBIQUITIN-LIKE DOMAIN-CONTAINING CTD PHOSPHATASE 1"/>
    <property type="match status" value="1"/>
</dbReference>
<dbReference type="Pfam" id="PF03031">
    <property type="entry name" value="NIF"/>
    <property type="match status" value="1"/>
</dbReference>
<dbReference type="Pfam" id="PF00240">
    <property type="entry name" value="ubiquitin"/>
    <property type="match status" value="1"/>
</dbReference>
<dbReference type="SMART" id="SM00577">
    <property type="entry name" value="CPDc"/>
    <property type="match status" value="1"/>
</dbReference>
<dbReference type="SMART" id="SM00213">
    <property type="entry name" value="UBQ"/>
    <property type="match status" value="1"/>
</dbReference>
<dbReference type="SUPFAM" id="SSF56784">
    <property type="entry name" value="HAD-like"/>
    <property type="match status" value="1"/>
</dbReference>
<dbReference type="SUPFAM" id="SSF54236">
    <property type="entry name" value="Ubiquitin-like"/>
    <property type="match status" value="1"/>
</dbReference>
<dbReference type="PROSITE" id="PS50969">
    <property type="entry name" value="FCP1"/>
    <property type="match status" value="1"/>
</dbReference>
<dbReference type="PROSITE" id="PS50053">
    <property type="entry name" value="UBIQUITIN_2"/>
    <property type="match status" value="1"/>
</dbReference>